<evidence type="ECO:0000255" key="1">
    <source>
        <dbReference type="HAMAP-Rule" id="MF_00318"/>
    </source>
</evidence>
<feature type="chain" id="PRO_0000280862" description="Enolase">
    <location>
        <begin position="1"/>
        <end position="429"/>
    </location>
</feature>
<feature type="active site" description="Proton donor" evidence="1">
    <location>
        <position position="205"/>
    </location>
</feature>
<feature type="active site" description="Proton acceptor" evidence="1">
    <location>
        <position position="339"/>
    </location>
</feature>
<feature type="binding site" evidence="1">
    <location>
        <position position="163"/>
    </location>
    <ligand>
        <name>(2R)-2-phosphoglycerate</name>
        <dbReference type="ChEBI" id="CHEBI:58289"/>
    </ligand>
</feature>
<feature type="binding site" evidence="1">
    <location>
        <position position="242"/>
    </location>
    <ligand>
        <name>Mg(2+)</name>
        <dbReference type="ChEBI" id="CHEBI:18420"/>
    </ligand>
</feature>
<feature type="binding site" evidence="1">
    <location>
        <position position="287"/>
    </location>
    <ligand>
        <name>Mg(2+)</name>
        <dbReference type="ChEBI" id="CHEBI:18420"/>
    </ligand>
</feature>
<feature type="binding site" evidence="1">
    <location>
        <position position="314"/>
    </location>
    <ligand>
        <name>Mg(2+)</name>
        <dbReference type="ChEBI" id="CHEBI:18420"/>
    </ligand>
</feature>
<feature type="binding site" evidence="1">
    <location>
        <position position="339"/>
    </location>
    <ligand>
        <name>(2R)-2-phosphoglycerate</name>
        <dbReference type="ChEBI" id="CHEBI:58289"/>
    </ligand>
</feature>
<feature type="binding site" evidence="1">
    <location>
        <position position="368"/>
    </location>
    <ligand>
        <name>(2R)-2-phosphoglycerate</name>
        <dbReference type="ChEBI" id="CHEBI:58289"/>
    </ligand>
</feature>
<feature type="binding site" evidence="1">
    <location>
        <position position="369"/>
    </location>
    <ligand>
        <name>(2R)-2-phosphoglycerate</name>
        <dbReference type="ChEBI" id="CHEBI:58289"/>
    </ligand>
</feature>
<feature type="binding site" evidence="1">
    <location>
        <position position="390"/>
    </location>
    <ligand>
        <name>(2R)-2-phosphoglycerate</name>
        <dbReference type="ChEBI" id="CHEBI:58289"/>
    </ligand>
</feature>
<accession>A0L7X8</accession>
<organism>
    <name type="scientific">Magnetococcus marinus (strain ATCC BAA-1437 / JCM 17883 / MC-1)</name>
    <dbReference type="NCBI Taxonomy" id="156889"/>
    <lineage>
        <taxon>Bacteria</taxon>
        <taxon>Pseudomonadati</taxon>
        <taxon>Pseudomonadota</taxon>
        <taxon>Alphaproteobacteria</taxon>
        <taxon>Magnetococcales</taxon>
        <taxon>Magnetococcaceae</taxon>
        <taxon>Magnetococcus</taxon>
    </lineage>
</organism>
<name>ENO_MAGMM</name>
<gene>
    <name evidence="1" type="primary">eno</name>
    <name type="ordered locus">Mmc1_1562</name>
</gene>
<dbReference type="EC" id="4.2.1.11" evidence="1"/>
<dbReference type="EMBL" id="CP000471">
    <property type="protein sequence ID" value="ABK44071.1"/>
    <property type="molecule type" value="Genomic_DNA"/>
</dbReference>
<dbReference type="RefSeq" id="WP_011713221.1">
    <property type="nucleotide sequence ID" value="NC_008576.1"/>
</dbReference>
<dbReference type="SMR" id="A0L7X8"/>
<dbReference type="STRING" id="156889.Mmc1_1562"/>
<dbReference type="KEGG" id="mgm:Mmc1_1562"/>
<dbReference type="eggNOG" id="COG0148">
    <property type="taxonomic scope" value="Bacteria"/>
</dbReference>
<dbReference type="HOGENOM" id="CLU_031223_2_1_5"/>
<dbReference type="OrthoDB" id="9804716at2"/>
<dbReference type="UniPathway" id="UPA00109">
    <property type="reaction ID" value="UER00187"/>
</dbReference>
<dbReference type="Proteomes" id="UP000002586">
    <property type="component" value="Chromosome"/>
</dbReference>
<dbReference type="GO" id="GO:0009986">
    <property type="term" value="C:cell surface"/>
    <property type="evidence" value="ECO:0007669"/>
    <property type="project" value="UniProtKB-SubCell"/>
</dbReference>
<dbReference type="GO" id="GO:0005576">
    <property type="term" value="C:extracellular region"/>
    <property type="evidence" value="ECO:0007669"/>
    <property type="project" value="UniProtKB-SubCell"/>
</dbReference>
<dbReference type="GO" id="GO:0000015">
    <property type="term" value="C:phosphopyruvate hydratase complex"/>
    <property type="evidence" value="ECO:0007669"/>
    <property type="project" value="InterPro"/>
</dbReference>
<dbReference type="GO" id="GO:0000287">
    <property type="term" value="F:magnesium ion binding"/>
    <property type="evidence" value="ECO:0007669"/>
    <property type="project" value="UniProtKB-UniRule"/>
</dbReference>
<dbReference type="GO" id="GO:0004634">
    <property type="term" value="F:phosphopyruvate hydratase activity"/>
    <property type="evidence" value="ECO:0007669"/>
    <property type="project" value="UniProtKB-UniRule"/>
</dbReference>
<dbReference type="GO" id="GO:0006096">
    <property type="term" value="P:glycolytic process"/>
    <property type="evidence" value="ECO:0007669"/>
    <property type="project" value="UniProtKB-UniRule"/>
</dbReference>
<dbReference type="CDD" id="cd03313">
    <property type="entry name" value="enolase"/>
    <property type="match status" value="1"/>
</dbReference>
<dbReference type="FunFam" id="3.20.20.120:FF:000001">
    <property type="entry name" value="Enolase"/>
    <property type="match status" value="1"/>
</dbReference>
<dbReference type="FunFam" id="3.30.390.10:FF:000001">
    <property type="entry name" value="Enolase"/>
    <property type="match status" value="1"/>
</dbReference>
<dbReference type="Gene3D" id="3.20.20.120">
    <property type="entry name" value="Enolase-like C-terminal domain"/>
    <property type="match status" value="1"/>
</dbReference>
<dbReference type="Gene3D" id="3.30.390.10">
    <property type="entry name" value="Enolase-like, N-terminal domain"/>
    <property type="match status" value="1"/>
</dbReference>
<dbReference type="HAMAP" id="MF_00318">
    <property type="entry name" value="Enolase"/>
    <property type="match status" value="1"/>
</dbReference>
<dbReference type="InterPro" id="IPR000941">
    <property type="entry name" value="Enolase"/>
</dbReference>
<dbReference type="InterPro" id="IPR036849">
    <property type="entry name" value="Enolase-like_C_sf"/>
</dbReference>
<dbReference type="InterPro" id="IPR029017">
    <property type="entry name" value="Enolase-like_N"/>
</dbReference>
<dbReference type="InterPro" id="IPR020810">
    <property type="entry name" value="Enolase_C"/>
</dbReference>
<dbReference type="InterPro" id="IPR020809">
    <property type="entry name" value="Enolase_CS"/>
</dbReference>
<dbReference type="InterPro" id="IPR020811">
    <property type="entry name" value="Enolase_N"/>
</dbReference>
<dbReference type="NCBIfam" id="TIGR01060">
    <property type="entry name" value="eno"/>
    <property type="match status" value="1"/>
</dbReference>
<dbReference type="PANTHER" id="PTHR11902">
    <property type="entry name" value="ENOLASE"/>
    <property type="match status" value="1"/>
</dbReference>
<dbReference type="PANTHER" id="PTHR11902:SF1">
    <property type="entry name" value="ENOLASE"/>
    <property type="match status" value="1"/>
</dbReference>
<dbReference type="Pfam" id="PF00113">
    <property type="entry name" value="Enolase_C"/>
    <property type="match status" value="1"/>
</dbReference>
<dbReference type="Pfam" id="PF03952">
    <property type="entry name" value="Enolase_N"/>
    <property type="match status" value="1"/>
</dbReference>
<dbReference type="PIRSF" id="PIRSF001400">
    <property type="entry name" value="Enolase"/>
    <property type="match status" value="1"/>
</dbReference>
<dbReference type="PRINTS" id="PR00148">
    <property type="entry name" value="ENOLASE"/>
</dbReference>
<dbReference type="SFLD" id="SFLDF00002">
    <property type="entry name" value="enolase"/>
    <property type="match status" value="1"/>
</dbReference>
<dbReference type="SFLD" id="SFLDG00178">
    <property type="entry name" value="enolase"/>
    <property type="match status" value="1"/>
</dbReference>
<dbReference type="SMART" id="SM01192">
    <property type="entry name" value="Enolase_C"/>
    <property type="match status" value="1"/>
</dbReference>
<dbReference type="SMART" id="SM01193">
    <property type="entry name" value="Enolase_N"/>
    <property type="match status" value="1"/>
</dbReference>
<dbReference type="SUPFAM" id="SSF51604">
    <property type="entry name" value="Enolase C-terminal domain-like"/>
    <property type="match status" value="1"/>
</dbReference>
<dbReference type="SUPFAM" id="SSF54826">
    <property type="entry name" value="Enolase N-terminal domain-like"/>
    <property type="match status" value="1"/>
</dbReference>
<dbReference type="PROSITE" id="PS00164">
    <property type="entry name" value="ENOLASE"/>
    <property type="match status" value="1"/>
</dbReference>
<reference key="1">
    <citation type="journal article" date="2009" name="Appl. Environ. Microbiol.">
        <title>Complete genome sequence of the chemolithoautotrophic marine magnetotactic coccus strain MC-1.</title>
        <authorList>
            <person name="Schubbe S."/>
            <person name="Williams T.J."/>
            <person name="Xie G."/>
            <person name="Kiss H.E."/>
            <person name="Brettin T.S."/>
            <person name="Martinez D."/>
            <person name="Ross C.A."/>
            <person name="Schuler D."/>
            <person name="Cox B.L."/>
            <person name="Nealson K.H."/>
            <person name="Bazylinski D.A."/>
        </authorList>
    </citation>
    <scope>NUCLEOTIDE SEQUENCE [LARGE SCALE GENOMIC DNA]</scope>
    <source>
        <strain>ATCC BAA-1437 / JCM 17883 / MC-1</strain>
    </source>
</reference>
<sequence>MSSIVEIHGREVIDSRGNPTVEVDVYTEDGGFGRAAVPSGASTGSREAVELRDGDKSRFLGKGVRKAVDAVNTVLAEVVLGMEVADQKGIDAAMIALDGTHNKSRLGANAILGISMAVAKAAADECDLPLYRYLGGTNTSLLPVPMMNIINGGAHADNNVDIQEFMIMPVAATSCTEAIRMGAEVFHSLKKVLKSKGLNTAVGDEGGFAPNLGSNEEALKVIVEAIEAAGYKPGEDIKLALDCASSEFYNKETGNYDLTGEGRVLTKQELVAFYEDLVAKYPIISIEDGFDESDWDGWKLMTEALGNKIQLVGDDLFVTNSKILAEGISKGIANSILVKVNQIGTLTETFEAVEMAQRAGYTAVISHRSGETEDATIADIAVALNAGQIKTGSMSRSDRIAKYNQLIRIEEELGGMARFEGMKVFYNLR</sequence>
<comment type="function">
    <text evidence="1">Catalyzes the reversible conversion of 2-phosphoglycerate (2-PG) into phosphoenolpyruvate (PEP). It is essential for the degradation of carbohydrates via glycolysis.</text>
</comment>
<comment type="catalytic activity">
    <reaction evidence="1">
        <text>(2R)-2-phosphoglycerate = phosphoenolpyruvate + H2O</text>
        <dbReference type="Rhea" id="RHEA:10164"/>
        <dbReference type="ChEBI" id="CHEBI:15377"/>
        <dbReference type="ChEBI" id="CHEBI:58289"/>
        <dbReference type="ChEBI" id="CHEBI:58702"/>
        <dbReference type="EC" id="4.2.1.11"/>
    </reaction>
</comment>
<comment type="cofactor">
    <cofactor evidence="1">
        <name>Mg(2+)</name>
        <dbReference type="ChEBI" id="CHEBI:18420"/>
    </cofactor>
    <text evidence="1">Binds a second Mg(2+) ion via substrate during catalysis.</text>
</comment>
<comment type="pathway">
    <text evidence="1">Carbohydrate degradation; glycolysis; pyruvate from D-glyceraldehyde 3-phosphate: step 4/5.</text>
</comment>
<comment type="subcellular location">
    <subcellularLocation>
        <location evidence="1">Cytoplasm</location>
    </subcellularLocation>
    <subcellularLocation>
        <location evidence="1">Secreted</location>
    </subcellularLocation>
    <subcellularLocation>
        <location evidence="1">Cell surface</location>
    </subcellularLocation>
    <text evidence="1">Fractions of enolase are present in both the cytoplasm and on the cell surface.</text>
</comment>
<comment type="similarity">
    <text evidence="1">Belongs to the enolase family.</text>
</comment>
<proteinExistence type="inferred from homology"/>
<protein>
    <recommendedName>
        <fullName evidence="1">Enolase</fullName>
        <ecNumber evidence="1">4.2.1.11</ecNumber>
    </recommendedName>
    <alternativeName>
        <fullName evidence="1">2-phospho-D-glycerate hydro-lyase</fullName>
    </alternativeName>
    <alternativeName>
        <fullName evidence="1">2-phosphoglycerate dehydratase</fullName>
    </alternativeName>
</protein>
<keyword id="KW-0963">Cytoplasm</keyword>
<keyword id="KW-0324">Glycolysis</keyword>
<keyword id="KW-0456">Lyase</keyword>
<keyword id="KW-0460">Magnesium</keyword>
<keyword id="KW-0479">Metal-binding</keyword>
<keyword id="KW-1185">Reference proteome</keyword>
<keyword id="KW-0964">Secreted</keyword>